<protein>
    <recommendedName>
        <fullName evidence="1">Synaptojanin-2-binding protein</fullName>
    </recommendedName>
    <alternativeName>
        <fullName evidence="11">Activin receptor-interacting protein 2</fullName>
    </alternativeName>
    <alternativeName>
        <fullName evidence="19">Activin receptor-interacting protein 4</fullName>
    </alternativeName>
    <alternativeName>
        <fullName evidence="1">Mitochondrial outer membrane protein 25</fullName>
    </alternativeName>
</protein>
<name>SYJ2B_MOUSE</name>
<accession>Q9D6K5</accession>
<accession>Q2TTN6</accession>
<accession>Q6YNE6</accession>
<accession>Q78HT9</accession>
<accession>Q8K4F3</accession>
<accession>Q9D8G4</accession>
<reference evidence="14 17" key="1">
    <citation type="journal article" date="2002" name="J. Biol. Chem.">
        <title>Regulation of endocytosis of activin type II receptors by a novel PDZ protein through Ral/Ral-binding protein 1-dependent pathway.</title>
        <authorList>
            <person name="Matsuzaki T."/>
            <person name="Hanai S."/>
            <person name="Kishi H."/>
            <person name="Liu Z."/>
            <person name="Bao Y."/>
            <person name="Kikuchi A."/>
            <person name="Tsuchida K."/>
            <person name="Sugino H."/>
        </authorList>
    </citation>
    <scope>NUCLEOTIDE SEQUENCE [MRNA] (ISOFORM 4)</scope>
    <scope>FUNCTION</scope>
    <scope>SUBUNIT</scope>
    <scope>INTERACTION WITH ACVR2A; ACVR2B AND RALBP1</scope>
    <scope>SUBCELLULAR LOCATION</scope>
    <scope>TISSUE SPECIFICITY</scope>
    <source>
        <tissue evidence="5">Brain</tissue>
    </source>
</reference>
<reference evidence="14 16" key="2">
    <citation type="journal article" date="2006" name="J. Endocrinol.">
        <title>Characterization of isoforms of activin receptor-interacting protein 2 that augment activin signaling.</title>
        <authorList>
            <person name="Liu Z.H."/>
            <person name="Tsuchida K."/>
            <person name="Matsuzaki T."/>
            <person name="Bao Y.L."/>
            <person name="Kurisaki A."/>
            <person name="Sugino H."/>
        </authorList>
    </citation>
    <scope>NUCLEOTIDE SEQUENCE [MRNA] (ISOFORMS 1; 2; 3 AND 4)</scope>
    <scope>FUNCTION</scope>
    <scope>INTERACTION WITH ACVR2A</scope>
    <source>
        <strain evidence="16">C57BL/6J</strain>
    </source>
</reference>
<reference evidence="14 18" key="3">
    <citation type="submission" date="2004-03" db="EMBL/GenBank/DDBJ databases">
        <title>Identification and characterization of a novel protein that interacts with activin type II receptors.</title>
        <authorList>
            <person name="Tai G.X."/>
            <person name="Liu Z.H."/>
            <person name="Xu G.Y."/>
            <person name="Yang Y."/>
            <person name="Zhang P.Y."/>
        </authorList>
    </citation>
    <scope>NUCLEOTIDE SEQUENCE [MRNA] (ISOFORM 2)</scope>
</reference>
<reference evidence="14 21" key="4">
    <citation type="journal article" date="2005" name="Science">
        <title>The transcriptional landscape of the mammalian genome.</title>
        <authorList>
            <person name="Carninci P."/>
            <person name="Kasukawa T."/>
            <person name="Katayama S."/>
            <person name="Gough J."/>
            <person name="Frith M.C."/>
            <person name="Maeda N."/>
            <person name="Oyama R."/>
            <person name="Ravasi T."/>
            <person name="Lenhard B."/>
            <person name="Wells C."/>
            <person name="Kodzius R."/>
            <person name="Shimokawa K."/>
            <person name="Bajic V.B."/>
            <person name="Brenner S.E."/>
            <person name="Batalov S."/>
            <person name="Forrest A.R."/>
            <person name="Zavolan M."/>
            <person name="Davis M.J."/>
            <person name="Wilming L.G."/>
            <person name="Aidinis V."/>
            <person name="Allen J.E."/>
            <person name="Ambesi-Impiombato A."/>
            <person name="Apweiler R."/>
            <person name="Aturaliya R.N."/>
            <person name="Bailey T.L."/>
            <person name="Bansal M."/>
            <person name="Baxter L."/>
            <person name="Beisel K.W."/>
            <person name="Bersano T."/>
            <person name="Bono H."/>
            <person name="Chalk A.M."/>
            <person name="Chiu K.P."/>
            <person name="Choudhary V."/>
            <person name="Christoffels A."/>
            <person name="Clutterbuck D.R."/>
            <person name="Crowe M.L."/>
            <person name="Dalla E."/>
            <person name="Dalrymple B.P."/>
            <person name="de Bono B."/>
            <person name="Della Gatta G."/>
            <person name="di Bernardo D."/>
            <person name="Down T."/>
            <person name="Engstrom P."/>
            <person name="Fagiolini M."/>
            <person name="Faulkner G."/>
            <person name="Fletcher C.F."/>
            <person name="Fukushima T."/>
            <person name="Furuno M."/>
            <person name="Futaki S."/>
            <person name="Gariboldi M."/>
            <person name="Georgii-Hemming P."/>
            <person name="Gingeras T.R."/>
            <person name="Gojobori T."/>
            <person name="Green R.E."/>
            <person name="Gustincich S."/>
            <person name="Harbers M."/>
            <person name="Hayashi Y."/>
            <person name="Hensch T.K."/>
            <person name="Hirokawa N."/>
            <person name="Hill D."/>
            <person name="Huminiecki L."/>
            <person name="Iacono M."/>
            <person name="Ikeo K."/>
            <person name="Iwama A."/>
            <person name="Ishikawa T."/>
            <person name="Jakt M."/>
            <person name="Kanapin A."/>
            <person name="Katoh M."/>
            <person name="Kawasawa Y."/>
            <person name="Kelso J."/>
            <person name="Kitamura H."/>
            <person name="Kitano H."/>
            <person name="Kollias G."/>
            <person name="Krishnan S.P."/>
            <person name="Kruger A."/>
            <person name="Kummerfeld S.K."/>
            <person name="Kurochkin I.V."/>
            <person name="Lareau L.F."/>
            <person name="Lazarevic D."/>
            <person name="Lipovich L."/>
            <person name="Liu J."/>
            <person name="Liuni S."/>
            <person name="McWilliam S."/>
            <person name="Madan Babu M."/>
            <person name="Madera M."/>
            <person name="Marchionni L."/>
            <person name="Matsuda H."/>
            <person name="Matsuzawa S."/>
            <person name="Miki H."/>
            <person name="Mignone F."/>
            <person name="Miyake S."/>
            <person name="Morris K."/>
            <person name="Mottagui-Tabar S."/>
            <person name="Mulder N."/>
            <person name="Nakano N."/>
            <person name="Nakauchi H."/>
            <person name="Ng P."/>
            <person name="Nilsson R."/>
            <person name="Nishiguchi S."/>
            <person name="Nishikawa S."/>
            <person name="Nori F."/>
            <person name="Ohara O."/>
            <person name="Okazaki Y."/>
            <person name="Orlando V."/>
            <person name="Pang K.C."/>
            <person name="Pavan W.J."/>
            <person name="Pavesi G."/>
            <person name="Pesole G."/>
            <person name="Petrovsky N."/>
            <person name="Piazza S."/>
            <person name="Reed J."/>
            <person name="Reid J.F."/>
            <person name="Ring B.Z."/>
            <person name="Ringwald M."/>
            <person name="Rost B."/>
            <person name="Ruan Y."/>
            <person name="Salzberg S.L."/>
            <person name="Sandelin A."/>
            <person name="Schneider C."/>
            <person name="Schoenbach C."/>
            <person name="Sekiguchi K."/>
            <person name="Semple C.A."/>
            <person name="Seno S."/>
            <person name="Sessa L."/>
            <person name="Sheng Y."/>
            <person name="Shibata Y."/>
            <person name="Shimada H."/>
            <person name="Shimada K."/>
            <person name="Silva D."/>
            <person name="Sinclair B."/>
            <person name="Sperling S."/>
            <person name="Stupka E."/>
            <person name="Sugiura K."/>
            <person name="Sultana R."/>
            <person name="Takenaka Y."/>
            <person name="Taki K."/>
            <person name="Tammoja K."/>
            <person name="Tan S.L."/>
            <person name="Tang S."/>
            <person name="Taylor M.S."/>
            <person name="Tegner J."/>
            <person name="Teichmann S.A."/>
            <person name="Ueda H.R."/>
            <person name="van Nimwegen E."/>
            <person name="Verardo R."/>
            <person name="Wei C.L."/>
            <person name="Yagi K."/>
            <person name="Yamanishi H."/>
            <person name="Zabarovsky E."/>
            <person name="Zhu S."/>
            <person name="Zimmer A."/>
            <person name="Hide W."/>
            <person name="Bult C."/>
            <person name="Grimmond S.M."/>
            <person name="Teasdale R.D."/>
            <person name="Liu E.T."/>
            <person name="Brusic V."/>
            <person name="Quackenbush J."/>
            <person name="Wahlestedt C."/>
            <person name="Mattick J.S."/>
            <person name="Hume D.A."/>
            <person name="Kai C."/>
            <person name="Sasaki D."/>
            <person name="Tomaru Y."/>
            <person name="Fukuda S."/>
            <person name="Kanamori-Katayama M."/>
            <person name="Suzuki M."/>
            <person name="Aoki J."/>
            <person name="Arakawa T."/>
            <person name="Iida J."/>
            <person name="Imamura K."/>
            <person name="Itoh M."/>
            <person name="Kato T."/>
            <person name="Kawaji H."/>
            <person name="Kawagashira N."/>
            <person name="Kawashima T."/>
            <person name="Kojima M."/>
            <person name="Kondo S."/>
            <person name="Konno H."/>
            <person name="Nakano K."/>
            <person name="Ninomiya N."/>
            <person name="Nishio T."/>
            <person name="Okada M."/>
            <person name="Plessy C."/>
            <person name="Shibata K."/>
            <person name="Shiraki T."/>
            <person name="Suzuki S."/>
            <person name="Tagami M."/>
            <person name="Waki K."/>
            <person name="Watahiki A."/>
            <person name="Okamura-Oho Y."/>
            <person name="Suzuki H."/>
            <person name="Kawai J."/>
            <person name="Hayashizaki Y."/>
        </authorList>
    </citation>
    <scope>NUCLEOTIDE SEQUENCE [LARGE SCALE MRNA] (ISOFORM 1)</scope>
    <source>
        <strain evidence="21">C57BL/6J</strain>
        <tissue evidence="22">Colon</tissue>
        <tissue evidence="23">Egg</tissue>
        <tissue evidence="21">Hippocampus</tissue>
        <tissue evidence="20">Small intestine</tissue>
    </source>
</reference>
<reference evidence="14 15" key="5">
    <citation type="journal article" date="2004" name="Genome Res.">
        <title>The status, quality, and expansion of the NIH full-length cDNA project: the Mammalian Gene Collection (MGC).</title>
        <authorList>
            <consortium name="The MGC Project Team"/>
        </authorList>
    </citation>
    <scope>NUCLEOTIDE SEQUENCE [LARGE SCALE MRNA] (ISOFORM 1)</scope>
    <source>
        <strain evidence="15">FVB/N</strain>
        <tissue evidence="15">Mammary tumor</tissue>
    </source>
</reference>
<reference evidence="14" key="6">
    <citation type="journal article" date="2007" name="World J. Gastroenterol.">
        <title>Regulation of activin receptor-interacting protein 2 expression in mouse hepatoma Hepa1-6 cells and its relationship with collagen type IV.</title>
        <authorList>
            <person name="Zhang H.J."/>
            <person name="Tai G.X."/>
            <person name="Zhou J."/>
            <person name="Ma D."/>
            <person name="Liu Z.H."/>
        </authorList>
    </citation>
    <scope>INDUCTION</scope>
</reference>
<reference key="7">
    <citation type="journal article" date="2010" name="Cell">
        <title>A tissue-specific atlas of mouse protein phosphorylation and expression.</title>
        <authorList>
            <person name="Huttlin E.L."/>
            <person name="Jedrychowski M.P."/>
            <person name="Elias J.E."/>
            <person name="Goswami T."/>
            <person name="Rad R."/>
            <person name="Beausoleil S.A."/>
            <person name="Villen J."/>
            <person name="Haas W."/>
            <person name="Sowa M.E."/>
            <person name="Gygi S.P."/>
        </authorList>
    </citation>
    <scope>IDENTIFICATION BY MASS SPECTROMETRY [LARGE SCALE ANALYSIS]</scope>
    <source>
        <tissue>Brain</tissue>
        <tissue>Brown adipose tissue</tissue>
        <tissue>Heart</tissue>
        <tissue>Kidney</tissue>
        <tissue>Liver</tissue>
        <tissue>Lung</tissue>
        <tissue>Pancreas</tissue>
        <tissue>Spleen</tissue>
        <tissue>Testis</tissue>
    </source>
</reference>
<gene>
    <name evidence="24" type="primary">Synj2bp</name>
    <name evidence="11" type="synonym">Arip2</name>
    <name evidence="1" type="synonym">Omp25</name>
</gene>
<keyword id="KW-0025">Alternative splicing</keyword>
<keyword id="KW-0963">Cytoplasm</keyword>
<keyword id="KW-0254">Endocytosis</keyword>
<keyword id="KW-0472">Membrane</keyword>
<keyword id="KW-0496">Mitochondrion</keyword>
<keyword id="KW-1000">Mitochondrion outer membrane</keyword>
<keyword id="KW-1185">Reference proteome</keyword>
<keyword id="KW-0735">Signal-anchor</keyword>
<keyword id="KW-0812">Transmembrane</keyword>
<keyword id="KW-1133">Transmembrane helix</keyword>
<comment type="function">
    <text evidence="5 8">Isoform 1 regulates endocytosis of activin type 2 receptor kinases through the Ral/RALBP1-dependent pathway and may be involved in suppression of activin-induced signal transduction. Isoform 2 and isoform 3 show a stimulatory affect on activin-induced signal transduction and enhance activin type 2 expression at the cell surface.</text>
</comment>
<comment type="subunit">
    <text evidence="1 2 5 8">Binds (via the PDZ domain) to isoform 2A of SYNJ2 (via the unique motif in the C-terminus) (By similarity). Interacts (via C-terminus) with RALBP1. Interacts (via PDZ domain) with ACVR2A (via C-terminus) and ACVR2B (via C-terminus). Forms a ternary complex with ACVR2A and RALBP1 (PubMed:11882656, PubMed:16648306). Interacts with MAPK12 (By similarity). Interacts with DLL1; enhances DLL1 protein stability, and promotes notch signaling in endothelial cells (By similarity).</text>
</comment>
<comment type="interaction">
    <interactant intactId="EBI-300910">
        <id>Q9D6K5</id>
    </interactant>
    <interactant intactId="EBI-300875">
        <id>A2ARV4</id>
        <label>Lrp2</label>
    </interactant>
    <organismsDiffer>false</organismsDiffer>
    <experiments>2</experiments>
</comment>
<comment type="subcellular location">
    <subcellularLocation>
        <location evidence="2">Mitochondrion outer membrane</location>
        <topology evidence="2">Single-pass type IV membrane protein</topology>
        <orientation evidence="2">Cytoplasmic side</orientation>
    </subcellularLocation>
    <subcellularLocation>
        <location evidence="5">Cytoplasm</location>
        <location evidence="5">Perinuclear region</location>
    </subcellularLocation>
</comment>
<comment type="alternative products">
    <event type="alternative splicing"/>
    <isoform>
        <id>Q9D6K5-1</id>
        <name evidence="6 7">1</name>
        <sequence type="displayed"/>
    </isoform>
    <isoform>
        <id>Q9D6K5-2</id>
        <name evidence="8 10">2</name>
        <sequence type="described" ref="VSP_053102 VSP_053104"/>
    </isoform>
    <isoform>
        <id>Q9D6K5-3</id>
        <name evidence="8">3</name>
        <sequence type="described" ref="VSP_053101 VSP_053102 VSP_053104"/>
    </isoform>
    <isoform>
        <id>Q9D6K5-4</id>
        <name evidence="5">4</name>
        <sequence type="described" ref="VSP_053103"/>
    </isoform>
</comment>
<comment type="tissue specificity">
    <text evidence="5 8">Isoform 1 and isoform 2 are widely expressed, notably in brain, heart, lung, liver, kidney, skeletal muscle, ovary and testis. Isoform 3 is detected only in heart, spleen and testis.</text>
</comment>
<comment type="induction">
    <text evidence="9">Up-regulated between 12 and 24 hours after treatment with activin A and lipopolysaccharide (LPS). Down-regulated by calcium ionophore A23187.</text>
</comment>
<comment type="sequence caution" evidence="14">
    <conflict type="erroneous initiation">
        <sequence resource="EMBL-CDS" id="AAH27433"/>
    </conflict>
</comment>
<feature type="chain" id="PRO_0000375982" description="Synaptojanin-2-binding protein">
    <location>
        <begin position="1"/>
        <end position="145"/>
    </location>
</feature>
<feature type="topological domain" description="Cytoplasmic" evidence="3">
    <location>
        <begin position="1"/>
        <end position="117"/>
    </location>
</feature>
<feature type="transmembrane region" description="Helical; Anchor for type IV membrane protein" evidence="3">
    <location>
        <begin position="118"/>
        <end position="138"/>
    </location>
</feature>
<feature type="topological domain" description="Mitochondrial intermembrane" evidence="3">
    <location>
        <begin position="139"/>
        <end position="145"/>
    </location>
</feature>
<feature type="domain" description="PDZ" evidence="4">
    <location>
        <begin position="13"/>
        <end position="100"/>
    </location>
</feature>
<feature type="splice variant" id="VSP_053101" description="In isoform 3." evidence="12">
    <original>MNGRVDYLVTEEEINLTRGP</original>
    <variation>MIF</variation>
    <location>
        <begin position="1"/>
        <end position="20"/>
    </location>
</feature>
<feature type="splice variant" id="VSP_053102" description="In isoform 2 and isoform 3." evidence="12 13">
    <original>LPVQNGPIVHRGEGEPSGV</original>
    <variation>VGITCTWIWDSRLLHCSCE</variation>
    <location>
        <begin position="100"/>
        <end position="118"/>
    </location>
</feature>
<feature type="splice variant" id="VSP_053103" description="In isoform 4." evidence="11 12">
    <original>PVQNGPIVHRGEGEPSGVPVAMVLLPVFALTMVAVWAFVRYRKQL</original>
    <variation>LVVGGSFGLREFSQIRYDAVTIKIDPELEKKLKVNKITLESEYERLLCLLCRQ</variation>
    <location>
        <begin position="101"/>
        <end position="145"/>
    </location>
</feature>
<feature type="splice variant" id="VSP_053104" description="In isoform 2 and isoform 3." evidence="12 13">
    <location>
        <begin position="119"/>
        <end position="145"/>
    </location>
</feature>
<feature type="sequence conflict" description="In Ref. 4; BAB25432." evidence="14" ref="4">
    <original>Q</original>
    <variation>E</variation>
    <location>
        <position position="34"/>
    </location>
</feature>
<organism>
    <name type="scientific">Mus musculus</name>
    <name type="common">Mouse</name>
    <dbReference type="NCBI Taxonomy" id="10090"/>
    <lineage>
        <taxon>Eukaryota</taxon>
        <taxon>Metazoa</taxon>
        <taxon>Chordata</taxon>
        <taxon>Craniata</taxon>
        <taxon>Vertebrata</taxon>
        <taxon>Euteleostomi</taxon>
        <taxon>Mammalia</taxon>
        <taxon>Eutheria</taxon>
        <taxon>Euarchontoglires</taxon>
        <taxon>Glires</taxon>
        <taxon>Rodentia</taxon>
        <taxon>Myomorpha</taxon>
        <taxon>Muroidea</taxon>
        <taxon>Muridae</taxon>
        <taxon>Murinae</taxon>
        <taxon>Mus</taxon>
        <taxon>Mus</taxon>
    </lineage>
</organism>
<sequence>MNGRVDYLVTEEEINLTRGPSGLGFNIVGGTDQQYVSNDSGIYVSRIKEDGAAAQDGRLQEGDKILSVNGQDLKNLLHQDAVDLFRNAGCAVSLRVQHRLPVQNGPIVHRGEGEPSGVPVAMVLLPVFALTMVAVWAFVRYRKQL</sequence>
<dbReference type="EMBL" id="AF414433">
    <property type="protein sequence ID" value="AAM43958.1"/>
    <property type="molecule type" value="mRNA"/>
</dbReference>
<dbReference type="EMBL" id="AY071903">
    <property type="protein sequence ID" value="AAL60065.1"/>
    <property type="molecule type" value="mRNA"/>
</dbReference>
<dbReference type="EMBL" id="AY157057">
    <property type="protein sequence ID" value="AAO12271.1"/>
    <property type="molecule type" value="mRNA"/>
</dbReference>
<dbReference type="EMBL" id="AY138960">
    <property type="protein sequence ID" value="AAN17786.1"/>
    <property type="molecule type" value="mRNA"/>
</dbReference>
<dbReference type="EMBL" id="AY566156">
    <property type="protein sequence ID" value="AAT70239.1"/>
    <property type="molecule type" value="mRNA"/>
</dbReference>
<dbReference type="EMBL" id="AK008054">
    <property type="protein sequence ID" value="BAB25432.1"/>
    <property type="molecule type" value="mRNA"/>
</dbReference>
<dbReference type="EMBL" id="AK013474">
    <property type="protein sequence ID" value="BAB28873.1"/>
    <property type="molecule type" value="mRNA"/>
</dbReference>
<dbReference type="EMBL" id="AK033514">
    <property type="protein sequence ID" value="BAC28333.1"/>
    <property type="molecule type" value="mRNA"/>
</dbReference>
<dbReference type="EMBL" id="AK163362">
    <property type="protein sequence ID" value="BAE37317.1"/>
    <property type="molecule type" value="mRNA"/>
</dbReference>
<dbReference type="EMBL" id="BC027433">
    <property type="protein sequence ID" value="AAH27433.2"/>
    <property type="status" value="ALT_INIT"/>
    <property type="molecule type" value="mRNA"/>
</dbReference>
<dbReference type="CCDS" id="CCDS26021.1">
    <molecule id="Q9D6K5-1"/>
</dbReference>
<dbReference type="CCDS" id="CCDS83979.1">
    <molecule id="Q9D6K5-2"/>
</dbReference>
<dbReference type="RefSeq" id="NP_001296743.1">
    <molecule id="Q9D6K5-2"/>
    <property type="nucleotide sequence ID" value="NM_001309814.1"/>
</dbReference>
<dbReference type="RefSeq" id="NP_001296777.1">
    <molecule id="Q9D6K5-4"/>
    <property type="nucleotide sequence ID" value="NM_001309848.1"/>
</dbReference>
<dbReference type="RefSeq" id="NP_079568.1">
    <molecule id="Q9D6K5-1"/>
    <property type="nucleotide sequence ID" value="NM_025292.7"/>
</dbReference>
<dbReference type="SMR" id="Q9D6K5"/>
<dbReference type="BioGRID" id="204883">
    <property type="interactions" value="4"/>
</dbReference>
<dbReference type="FunCoup" id="Q9D6K5">
    <property type="interactions" value="647"/>
</dbReference>
<dbReference type="IntAct" id="Q9D6K5">
    <property type="interactions" value="4"/>
</dbReference>
<dbReference type="STRING" id="10090.ENSMUSP00000129224"/>
<dbReference type="GlyGen" id="Q9D6K5">
    <property type="glycosylation" value="1 site, 1 N-linked glycan (1 site)"/>
</dbReference>
<dbReference type="iPTMnet" id="Q9D6K5"/>
<dbReference type="PhosphoSitePlus" id="Q9D6K5"/>
<dbReference type="SwissPalm" id="Q9D6K5"/>
<dbReference type="jPOST" id="Q9D6K5"/>
<dbReference type="PaxDb" id="10090-ENSMUSP00000129224"/>
<dbReference type="PeptideAtlas" id="Q9D6K5"/>
<dbReference type="ProteomicsDB" id="254835">
    <molecule id="Q9D6K5-1"/>
</dbReference>
<dbReference type="ProteomicsDB" id="254836">
    <molecule id="Q9D6K5-2"/>
</dbReference>
<dbReference type="ProteomicsDB" id="254837">
    <molecule id="Q9D6K5-3"/>
</dbReference>
<dbReference type="ProteomicsDB" id="254838">
    <molecule id="Q9D6K5-4"/>
</dbReference>
<dbReference type="Pumba" id="Q9D6K5"/>
<dbReference type="DNASU" id="24071"/>
<dbReference type="Ensembl" id="ENSMUST00000114201.3">
    <molecule id="Q9D6K5-3"/>
    <property type="protein sequence ID" value="ENSMUSP00000109839.3"/>
    <property type="gene ID" value="ENSMUSG00000090935.11"/>
</dbReference>
<dbReference type="Ensembl" id="ENSMUST00000163402.8">
    <molecule id="Q9D6K5-1"/>
    <property type="protein sequence ID" value="ENSMUSP00000129224.2"/>
    <property type="gene ID" value="ENSMUSG00000090935.11"/>
</dbReference>
<dbReference type="Ensembl" id="ENSMUST00000164386.8">
    <molecule id="Q9D6K5-4"/>
    <property type="protein sequence ID" value="ENSMUSP00000132941.2"/>
    <property type="gene ID" value="ENSMUSG00000021139.18"/>
</dbReference>
<dbReference type="Ensembl" id="ENSMUST00000169158.2">
    <molecule id="Q9D6K5-2"/>
    <property type="protein sequence ID" value="ENSMUSP00000130691.2"/>
    <property type="gene ID" value="ENSMUSG00000090935.11"/>
</dbReference>
<dbReference type="GeneID" id="105940408"/>
<dbReference type="GeneID" id="24071"/>
<dbReference type="KEGG" id="mmu:105940408"/>
<dbReference type="KEGG" id="mmu:24071"/>
<dbReference type="UCSC" id="uc007oca.1">
    <molecule id="Q9D6K5-4"/>
    <property type="organism name" value="mouse"/>
</dbReference>
<dbReference type="UCSC" id="uc007och.2">
    <molecule id="Q9D6K5-1"/>
    <property type="organism name" value="mouse"/>
</dbReference>
<dbReference type="UCSC" id="uc007ocj.2">
    <molecule id="Q9D6K5-2"/>
    <property type="organism name" value="mouse"/>
</dbReference>
<dbReference type="AGR" id="MGI:1344347"/>
<dbReference type="CTD" id="105940408"/>
<dbReference type="CTD" id="55333"/>
<dbReference type="MGI" id="MGI:1344347">
    <property type="gene designation" value="Synj2bp"/>
</dbReference>
<dbReference type="VEuPathDB" id="HostDB:ENSMUSG00000021139"/>
<dbReference type="VEuPathDB" id="HostDB:ENSMUSG00000090935"/>
<dbReference type="eggNOG" id="KOG3528">
    <property type="taxonomic scope" value="Eukaryota"/>
</dbReference>
<dbReference type="GeneTree" id="ENSGT00830000128402"/>
<dbReference type="HOGENOM" id="CLU_149433_1_0_1"/>
<dbReference type="InParanoid" id="Q9D6K5"/>
<dbReference type="OMA" id="FRNAGCD"/>
<dbReference type="OrthoDB" id="123971at2759"/>
<dbReference type="PhylomeDB" id="Q9D6K5"/>
<dbReference type="TreeFam" id="TF318964"/>
<dbReference type="BioGRID-ORCS" id="105940408">
    <property type="hits" value="0 hits in 5 CRISPR screens"/>
</dbReference>
<dbReference type="BioGRID-ORCS" id="24071">
    <property type="hits" value="5 hits in 76 CRISPR screens"/>
</dbReference>
<dbReference type="PRO" id="PR:Q9D6K5"/>
<dbReference type="Proteomes" id="UP000000589">
    <property type="component" value="Chromosome 12"/>
</dbReference>
<dbReference type="RNAct" id="Q9D6K5">
    <property type="molecule type" value="protein"/>
</dbReference>
<dbReference type="Bgee" id="ENSMUSG00000021139">
    <property type="expression patterns" value="Expressed in spermatid and 66 other cell types or tissues"/>
</dbReference>
<dbReference type="ExpressionAtlas" id="Q9D6K5">
    <property type="expression patterns" value="baseline and differential"/>
</dbReference>
<dbReference type="GO" id="GO:0009986">
    <property type="term" value="C:cell surface"/>
    <property type="evidence" value="ECO:0000314"/>
    <property type="project" value="UniProtKB"/>
</dbReference>
<dbReference type="GO" id="GO:0005741">
    <property type="term" value="C:mitochondrial outer membrane"/>
    <property type="evidence" value="ECO:0000266"/>
    <property type="project" value="MGI"/>
</dbReference>
<dbReference type="GO" id="GO:0048471">
    <property type="term" value="C:perinuclear region of cytoplasm"/>
    <property type="evidence" value="ECO:0007669"/>
    <property type="project" value="UniProtKB-SubCell"/>
</dbReference>
<dbReference type="GO" id="GO:0070699">
    <property type="term" value="F:type II activin receptor binding"/>
    <property type="evidence" value="ECO:0000353"/>
    <property type="project" value="UniProtKB"/>
</dbReference>
<dbReference type="GO" id="GO:0007028">
    <property type="term" value="P:cytoplasm organization"/>
    <property type="evidence" value="ECO:0000266"/>
    <property type="project" value="MGI"/>
</dbReference>
<dbReference type="GO" id="GO:0006897">
    <property type="term" value="P:endocytosis"/>
    <property type="evidence" value="ECO:0007669"/>
    <property type="project" value="UniProtKB-KW"/>
</dbReference>
<dbReference type="GO" id="GO:0048312">
    <property type="term" value="P:intracellular distribution of mitochondria"/>
    <property type="evidence" value="ECO:0007669"/>
    <property type="project" value="Ensembl"/>
</dbReference>
<dbReference type="GO" id="GO:0032926">
    <property type="term" value="P:negative regulation of activin receptor signaling pathway"/>
    <property type="evidence" value="ECO:0000314"/>
    <property type="project" value="UniProtKB"/>
</dbReference>
<dbReference type="GO" id="GO:0016525">
    <property type="term" value="P:negative regulation of angiogenesis"/>
    <property type="evidence" value="ECO:0000250"/>
    <property type="project" value="UniProtKB"/>
</dbReference>
<dbReference type="GO" id="GO:0010596">
    <property type="term" value="P:negative regulation of endothelial cell migration"/>
    <property type="evidence" value="ECO:0000250"/>
    <property type="project" value="UniProtKB"/>
</dbReference>
<dbReference type="GO" id="GO:0001937">
    <property type="term" value="P:negative regulation of endothelial cell proliferation"/>
    <property type="evidence" value="ECO:0000250"/>
    <property type="project" value="UniProtKB"/>
</dbReference>
<dbReference type="GO" id="GO:0070373">
    <property type="term" value="P:negative regulation of ERK1 and ERK2 cascade"/>
    <property type="evidence" value="ECO:0000250"/>
    <property type="project" value="UniProtKB"/>
</dbReference>
<dbReference type="GO" id="GO:1903671">
    <property type="term" value="P:negative regulation of sprouting angiogenesis"/>
    <property type="evidence" value="ECO:0000250"/>
    <property type="project" value="UniProtKB"/>
</dbReference>
<dbReference type="GO" id="GO:0032927">
    <property type="term" value="P:positive regulation of activin receptor signaling pathway"/>
    <property type="evidence" value="ECO:0000314"/>
    <property type="project" value="UniProtKB"/>
</dbReference>
<dbReference type="GO" id="GO:2000010">
    <property type="term" value="P:positive regulation of protein localization to cell surface"/>
    <property type="evidence" value="ECO:0000314"/>
    <property type="project" value="UniProtKB"/>
</dbReference>
<dbReference type="GO" id="GO:0002092">
    <property type="term" value="P:positive regulation of receptor internalization"/>
    <property type="evidence" value="ECO:0000314"/>
    <property type="project" value="UniProtKB"/>
</dbReference>
<dbReference type="GO" id="GO:0006605">
    <property type="term" value="P:protein targeting"/>
    <property type="evidence" value="ECO:0000314"/>
    <property type="project" value="MGI"/>
</dbReference>
<dbReference type="GO" id="GO:0030100">
    <property type="term" value="P:regulation of endocytosis"/>
    <property type="evidence" value="ECO:0000314"/>
    <property type="project" value="MGI"/>
</dbReference>
<dbReference type="GO" id="GO:0008593">
    <property type="term" value="P:regulation of Notch signaling pathway"/>
    <property type="evidence" value="ECO:0000250"/>
    <property type="project" value="UniProtKB"/>
</dbReference>
<dbReference type="GO" id="GO:0007266">
    <property type="term" value="P:Rho protein signal transduction"/>
    <property type="evidence" value="ECO:0000314"/>
    <property type="project" value="MGI"/>
</dbReference>
<dbReference type="CDD" id="cd06709">
    <property type="entry name" value="PDZ_SYNJ2BP-like"/>
    <property type="match status" value="1"/>
</dbReference>
<dbReference type="FunFam" id="2.30.42.10:FF:000161">
    <property type="entry name" value="Synaptojanin-2-binding protein"/>
    <property type="match status" value="1"/>
</dbReference>
<dbReference type="Gene3D" id="2.30.42.10">
    <property type="match status" value="1"/>
</dbReference>
<dbReference type="InterPro" id="IPR001478">
    <property type="entry name" value="PDZ"/>
</dbReference>
<dbReference type="InterPro" id="IPR036034">
    <property type="entry name" value="PDZ_sf"/>
</dbReference>
<dbReference type="InterPro" id="IPR050614">
    <property type="entry name" value="Synaptic_Scaffolding_LAP-MAGUK"/>
</dbReference>
<dbReference type="PANTHER" id="PTHR23119">
    <property type="entry name" value="DISCS LARGE"/>
    <property type="match status" value="1"/>
</dbReference>
<dbReference type="PANTHER" id="PTHR23119:SF51">
    <property type="entry name" value="DISKS LARGE 1 TUMOR SUPPRESSOR PROTEIN"/>
    <property type="match status" value="1"/>
</dbReference>
<dbReference type="Pfam" id="PF00595">
    <property type="entry name" value="PDZ"/>
    <property type="match status" value="1"/>
</dbReference>
<dbReference type="SMART" id="SM00228">
    <property type="entry name" value="PDZ"/>
    <property type="match status" value="1"/>
</dbReference>
<dbReference type="SUPFAM" id="SSF50156">
    <property type="entry name" value="PDZ domain-like"/>
    <property type="match status" value="1"/>
</dbReference>
<dbReference type="PROSITE" id="PS50106">
    <property type="entry name" value="PDZ"/>
    <property type="match status" value="1"/>
</dbReference>
<evidence type="ECO:0000250" key="1">
    <source>
        <dbReference type="UniProtKB" id="P57105"/>
    </source>
</evidence>
<evidence type="ECO:0000250" key="2">
    <source>
        <dbReference type="UniProtKB" id="Q9WVJ4"/>
    </source>
</evidence>
<evidence type="ECO:0000255" key="3"/>
<evidence type="ECO:0000255" key="4">
    <source>
        <dbReference type="PROSITE-ProRule" id="PRU00143"/>
    </source>
</evidence>
<evidence type="ECO:0000269" key="5">
    <source>
    </source>
</evidence>
<evidence type="ECO:0000269" key="6">
    <source>
    </source>
</evidence>
<evidence type="ECO:0000269" key="7">
    <source>
    </source>
</evidence>
<evidence type="ECO:0000269" key="8">
    <source>
    </source>
</evidence>
<evidence type="ECO:0000269" key="9">
    <source>
    </source>
</evidence>
<evidence type="ECO:0000269" key="10">
    <source ref="3"/>
</evidence>
<evidence type="ECO:0000303" key="11">
    <source>
    </source>
</evidence>
<evidence type="ECO:0000303" key="12">
    <source>
    </source>
</evidence>
<evidence type="ECO:0000303" key="13">
    <source ref="3"/>
</evidence>
<evidence type="ECO:0000305" key="14"/>
<evidence type="ECO:0000312" key="15">
    <source>
        <dbReference type="EMBL" id="AAH27433.2"/>
    </source>
</evidence>
<evidence type="ECO:0000312" key="16">
    <source>
        <dbReference type="EMBL" id="AAL60065.1"/>
    </source>
</evidence>
<evidence type="ECO:0000312" key="17">
    <source>
        <dbReference type="EMBL" id="AAM43958.1"/>
    </source>
</evidence>
<evidence type="ECO:0000312" key="18">
    <source>
        <dbReference type="EMBL" id="AAO12271.1"/>
    </source>
</evidence>
<evidence type="ECO:0000312" key="19">
    <source>
        <dbReference type="EMBL" id="AAT70239.1"/>
    </source>
</evidence>
<evidence type="ECO:0000312" key="20">
    <source>
        <dbReference type="EMBL" id="BAB25432.1"/>
    </source>
</evidence>
<evidence type="ECO:0000312" key="21">
    <source>
        <dbReference type="EMBL" id="BAB28873.1"/>
    </source>
</evidence>
<evidence type="ECO:0000312" key="22">
    <source>
        <dbReference type="EMBL" id="BAC28333.1"/>
    </source>
</evidence>
<evidence type="ECO:0000312" key="23">
    <source>
        <dbReference type="EMBL" id="BAE37317.1"/>
    </source>
</evidence>
<evidence type="ECO:0000312" key="24">
    <source>
        <dbReference type="MGI" id="MGI:1344347"/>
    </source>
</evidence>
<proteinExistence type="evidence at protein level"/>